<sequence>MKGSELRQRFLDYFARQGHAVVPSSSLIPADNPTLLFTVAGMVQFNDVFLGRESRPYSRAVSSQKCLRISGKQNDLENVGPSPRHHTFFEMLGNFSFGDYFKKDAIRFAWEFLTQEIGLDPKRMWVSIYEGDEQIPADEEAHDLWLAYMPAERILRFDAKDNLWSAGDVGPRGPCSEIHYYIGDDPDNQVPEGVNSEDDTYMEIWNLVFMQYNRDENGVLTLLPKPSIDTGMSLERLAIVKQGVFRSYETDLFTPIIHTVMELLGTGSDHYQANSSAYHVVADHSRSIAFMIADGLRPGNEGRSYVLRRLVRRAAYFGQTIGFKAPFLAETIATVIDMMGAAYPELRSKQAYIAEVVTGEEERFNKTLAGGLRQLEAMLPNQADKAVFSGADAFKLYDTYGFPLDLTERIVAERGLTVDLAGYEAELEAQRARGRGAAQFKKGAVTERWAERNLAPTSFTGYNELESWGHVLALEFDGEELGTVQRGQEVAFVLDRTPCYAESGGQMGDSGVLVGPHGTIVIDDVQKPVPGVFVHRGKVSKGSVSLGEQVTVTVDAARRRDIVRNHTATHLLHRALRDTLGDHAEQKGSLVAPERLRFDFNNQKGLSSEQLQQIEDQVNAWIRADSKVEAAEMALPQARELGAMALFGEKYGDVVRVVTVGCGNASDHIHTNSEAPVCSRELCGGVHVARTGEIGFFKIVSEGSVASGVRRIEAVTGRAAAEWVSQQAQLIRTLGDKLGAQPGKVEEKLDALLLDQKARRDEIERLRGEIAAGQVDSLLAQKIEQAGTPLVVARVEASDADSFRRLGEQLRDKIGSGVVILGTVIDGKPLLLAAATADQVKAGRHAGNLVKALAAKVGGGGGGRADFAQAGGRDAAALDQALAEANGLL</sequence>
<comment type="function">
    <text evidence="1">Catalyzes the attachment of alanine to tRNA(Ala) in a two-step reaction: alanine is first activated by ATP to form Ala-AMP and then transferred to the acceptor end of tRNA(Ala). Also edits incorrectly charged Ser-tRNA(Ala) and Gly-tRNA(Ala) via its editing domain.</text>
</comment>
<comment type="catalytic activity">
    <reaction evidence="1">
        <text>tRNA(Ala) + L-alanine + ATP = L-alanyl-tRNA(Ala) + AMP + diphosphate</text>
        <dbReference type="Rhea" id="RHEA:12540"/>
        <dbReference type="Rhea" id="RHEA-COMP:9657"/>
        <dbReference type="Rhea" id="RHEA-COMP:9923"/>
        <dbReference type="ChEBI" id="CHEBI:30616"/>
        <dbReference type="ChEBI" id="CHEBI:33019"/>
        <dbReference type="ChEBI" id="CHEBI:57972"/>
        <dbReference type="ChEBI" id="CHEBI:78442"/>
        <dbReference type="ChEBI" id="CHEBI:78497"/>
        <dbReference type="ChEBI" id="CHEBI:456215"/>
        <dbReference type="EC" id="6.1.1.7"/>
    </reaction>
</comment>
<comment type="cofactor">
    <cofactor evidence="1">
        <name>Zn(2+)</name>
        <dbReference type="ChEBI" id="CHEBI:29105"/>
    </cofactor>
    <text evidence="1">Binds 1 zinc ion per subunit.</text>
</comment>
<comment type="subcellular location">
    <subcellularLocation>
        <location evidence="1">Cytoplasm</location>
    </subcellularLocation>
</comment>
<comment type="domain">
    <text evidence="1">Consists of three domains; the N-terminal catalytic domain, the editing domain and the C-terminal C-Ala domain. The editing domain removes incorrectly charged amino acids, while the C-Ala domain, along with tRNA(Ala), serves as a bridge to cooperatively bring together the editing and aminoacylation centers thus stimulating deacylation of misacylated tRNAs.</text>
</comment>
<comment type="similarity">
    <text evidence="1">Belongs to the class-II aminoacyl-tRNA synthetase family.</text>
</comment>
<feature type="chain" id="PRO_0000347636" description="Alanine--tRNA ligase">
    <location>
        <begin position="1"/>
        <end position="889"/>
    </location>
</feature>
<feature type="binding site" evidence="1">
    <location>
        <position position="566"/>
    </location>
    <ligand>
        <name>Zn(2+)</name>
        <dbReference type="ChEBI" id="CHEBI:29105"/>
    </ligand>
</feature>
<feature type="binding site" evidence="1">
    <location>
        <position position="570"/>
    </location>
    <ligand>
        <name>Zn(2+)</name>
        <dbReference type="ChEBI" id="CHEBI:29105"/>
    </ligand>
</feature>
<feature type="binding site" evidence="1">
    <location>
        <position position="683"/>
    </location>
    <ligand>
        <name>Zn(2+)</name>
        <dbReference type="ChEBI" id="CHEBI:29105"/>
    </ligand>
</feature>
<feature type="binding site" evidence="1">
    <location>
        <position position="687"/>
    </location>
    <ligand>
        <name>Zn(2+)</name>
        <dbReference type="ChEBI" id="CHEBI:29105"/>
    </ligand>
</feature>
<proteinExistence type="inferred from homology"/>
<gene>
    <name evidence="1" type="primary">alaS</name>
    <name type="ordered locus">Haur_3635</name>
</gene>
<protein>
    <recommendedName>
        <fullName evidence="1">Alanine--tRNA ligase</fullName>
        <ecNumber evidence="1">6.1.1.7</ecNumber>
    </recommendedName>
    <alternativeName>
        <fullName evidence="1">Alanyl-tRNA synthetase</fullName>
        <shortName evidence="1">AlaRS</shortName>
    </alternativeName>
</protein>
<evidence type="ECO:0000255" key="1">
    <source>
        <dbReference type="HAMAP-Rule" id="MF_00036"/>
    </source>
</evidence>
<organism>
    <name type="scientific">Herpetosiphon aurantiacus (strain ATCC 23779 / DSM 785 / 114-95)</name>
    <dbReference type="NCBI Taxonomy" id="316274"/>
    <lineage>
        <taxon>Bacteria</taxon>
        <taxon>Bacillati</taxon>
        <taxon>Chloroflexota</taxon>
        <taxon>Chloroflexia</taxon>
        <taxon>Herpetosiphonales</taxon>
        <taxon>Herpetosiphonaceae</taxon>
        <taxon>Herpetosiphon</taxon>
    </lineage>
</organism>
<reference key="1">
    <citation type="journal article" date="2011" name="Stand. Genomic Sci.">
        <title>Complete genome sequence of the filamentous gliding predatory bacterium Herpetosiphon aurantiacus type strain (114-95(T)).</title>
        <authorList>
            <person name="Kiss H."/>
            <person name="Nett M."/>
            <person name="Domin N."/>
            <person name="Martin K."/>
            <person name="Maresca J.A."/>
            <person name="Copeland A."/>
            <person name="Lapidus A."/>
            <person name="Lucas S."/>
            <person name="Berry K.W."/>
            <person name="Glavina Del Rio T."/>
            <person name="Dalin E."/>
            <person name="Tice H."/>
            <person name="Pitluck S."/>
            <person name="Richardson P."/>
            <person name="Bruce D."/>
            <person name="Goodwin L."/>
            <person name="Han C."/>
            <person name="Detter J.C."/>
            <person name="Schmutz J."/>
            <person name="Brettin T."/>
            <person name="Land M."/>
            <person name="Hauser L."/>
            <person name="Kyrpides N.C."/>
            <person name="Ivanova N."/>
            <person name="Goeker M."/>
            <person name="Woyke T."/>
            <person name="Klenk H.P."/>
            <person name="Bryant D.A."/>
        </authorList>
    </citation>
    <scope>NUCLEOTIDE SEQUENCE [LARGE SCALE GENOMIC DNA]</scope>
    <source>
        <strain>ATCC 23779 / DSM 785 / 114-95</strain>
    </source>
</reference>
<keyword id="KW-0030">Aminoacyl-tRNA synthetase</keyword>
<keyword id="KW-0067">ATP-binding</keyword>
<keyword id="KW-0963">Cytoplasm</keyword>
<keyword id="KW-0436">Ligase</keyword>
<keyword id="KW-0479">Metal-binding</keyword>
<keyword id="KW-0547">Nucleotide-binding</keyword>
<keyword id="KW-0648">Protein biosynthesis</keyword>
<keyword id="KW-0694">RNA-binding</keyword>
<keyword id="KW-0820">tRNA-binding</keyword>
<keyword id="KW-0862">Zinc</keyword>
<accession>A9B660</accession>
<dbReference type="EC" id="6.1.1.7" evidence="1"/>
<dbReference type="EMBL" id="CP000875">
    <property type="protein sequence ID" value="ABX06271.1"/>
    <property type="molecule type" value="Genomic_DNA"/>
</dbReference>
<dbReference type="SMR" id="A9B660"/>
<dbReference type="FunCoup" id="A9B660">
    <property type="interactions" value="537"/>
</dbReference>
<dbReference type="STRING" id="316274.Haur_3635"/>
<dbReference type="KEGG" id="hau:Haur_3635"/>
<dbReference type="eggNOG" id="COG0013">
    <property type="taxonomic scope" value="Bacteria"/>
</dbReference>
<dbReference type="HOGENOM" id="CLU_004485_1_1_0"/>
<dbReference type="InParanoid" id="A9B660"/>
<dbReference type="Proteomes" id="UP000000787">
    <property type="component" value="Chromosome"/>
</dbReference>
<dbReference type="GO" id="GO:0005829">
    <property type="term" value="C:cytosol"/>
    <property type="evidence" value="ECO:0007669"/>
    <property type="project" value="TreeGrafter"/>
</dbReference>
<dbReference type="GO" id="GO:0004813">
    <property type="term" value="F:alanine-tRNA ligase activity"/>
    <property type="evidence" value="ECO:0007669"/>
    <property type="project" value="UniProtKB-UniRule"/>
</dbReference>
<dbReference type="GO" id="GO:0002161">
    <property type="term" value="F:aminoacyl-tRNA deacylase activity"/>
    <property type="evidence" value="ECO:0007669"/>
    <property type="project" value="TreeGrafter"/>
</dbReference>
<dbReference type="GO" id="GO:0005524">
    <property type="term" value="F:ATP binding"/>
    <property type="evidence" value="ECO:0007669"/>
    <property type="project" value="UniProtKB-UniRule"/>
</dbReference>
<dbReference type="GO" id="GO:0000049">
    <property type="term" value="F:tRNA binding"/>
    <property type="evidence" value="ECO:0007669"/>
    <property type="project" value="UniProtKB-KW"/>
</dbReference>
<dbReference type="GO" id="GO:0008270">
    <property type="term" value="F:zinc ion binding"/>
    <property type="evidence" value="ECO:0007669"/>
    <property type="project" value="UniProtKB-UniRule"/>
</dbReference>
<dbReference type="GO" id="GO:0006419">
    <property type="term" value="P:alanyl-tRNA aminoacylation"/>
    <property type="evidence" value="ECO:0007669"/>
    <property type="project" value="UniProtKB-UniRule"/>
</dbReference>
<dbReference type="CDD" id="cd00673">
    <property type="entry name" value="AlaRS_core"/>
    <property type="match status" value="1"/>
</dbReference>
<dbReference type="FunFam" id="2.40.30.130:FF:000001">
    <property type="entry name" value="Alanine--tRNA ligase"/>
    <property type="match status" value="1"/>
</dbReference>
<dbReference type="FunFam" id="3.10.310.40:FF:000001">
    <property type="entry name" value="Alanine--tRNA ligase"/>
    <property type="match status" value="1"/>
</dbReference>
<dbReference type="FunFam" id="3.30.54.20:FF:000001">
    <property type="entry name" value="Alanine--tRNA ligase"/>
    <property type="match status" value="1"/>
</dbReference>
<dbReference type="FunFam" id="3.30.930.10:FF:000004">
    <property type="entry name" value="Alanine--tRNA ligase"/>
    <property type="match status" value="1"/>
</dbReference>
<dbReference type="FunFam" id="3.30.980.10:FF:000004">
    <property type="entry name" value="Alanine--tRNA ligase, cytoplasmic"/>
    <property type="match status" value="1"/>
</dbReference>
<dbReference type="Gene3D" id="2.40.30.130">
    <property type="match status" value="1"/>
</dbReference>
<dbReference type="Gene3D" id="3.10.310.40">
    <property type="match status" value="1"/>
</dbReference>
<dbReference type="Gene3D" id="3.30.54.20">
    <property type="match status" value="1"/>
</dbReference>
<dbReference type="Gene3D" id="6.10.250.550">
    <property type="match status" value="1"/>
</dbReference>
<dbReference type="Gene3D" id="3.30.930.10">
    <property type="entry name" value="Bira Bifunctional Protein, Domain 2"/>
    <property type="match status" value="1"/>
</dbReference>
<dbReference type="Gene3D" id="3.30.980.10">
    <property type="entry name" value="Threonyl-trna Synthetase, Chain A, domain 2"/>
    <property type="match status" value="1"/>
</dbReference>
<dbReference type="HAMAP" id="MF_00036_B">
    <property type="entry name" value="Ala_tRNA_synth_B"/>
    <property type="match status" value="1"/>
</dbReference>
<dbReference type="InterPro" id="IPR045864">
    <property type="entry name" value="aa-tRNA-synth_II/BPL/LPL"/>
</dbReference>
<dbReference type="InterPro" id="IPR002318">
    <property type="entry name" value="Ala-tRNA-lgiase_IIc"/>
</dbReference>
<dbReference type="InterPro" id="IPR018162">
    <property type="entry name" value="Ala-tRNA-ligase_IIc_anticod-bd"/>
</dbReference>
<dbReference type="InterPro" id="IPR018165">
    <property type="entry name" value="Ala-tRNA-synth_IIc_core"/>
</dbReference>
<dbReference type="InterPro" id="IPR018164">
    <property type="entry name" value="Ala-tRNA-synth_IIc_N"/>
</dbReference>
<dbReference type="InterPro" id="IPR050058">
    <property type="entry name" value="Ala-tRNA_ligase"/>
</dbReference>
<dbReference type="InterPro" id="IPR023033">
    <property type="entry name" value="Ala_tRNA_ligase_euk/bac"/>
</dbReference>
<dbReference type="InterPro" id="IPR003156">
    <property type="entry name" value="DHHA1_dom"/>
</dbReference>
<dbReference type="InterPro" id="IPR018163">
    <property type="entry name" value="Thr/Ala-tRNA-synth_IIc_edit"/>
</dbReference>
<dbReference type="InterPro" id="IPR009000">
    <property type="entry name" value="Transl_B-barrel_sf"/>
</dbReference>
<dbReference type="InterPro" id="IPR012947">
    <property type="entry name" value="tRNA_SAD"/>
</dbReference>
<dbReference type="NCBIfam" id="TIGR00344">
    <property type="entry name" value="alaS"/>
    <property type="match status" value="1"/>
</dbReference>
<dbReference type="PANTHER" id="PTHR11777:SF9">
    <property type="entry name" value="ALANINE--TRNA LIGASE, CYTOPLASMIC"/>
    <property type="match status" value="1"/>
</dbReference>
<dbReference type="PANTHER" id="PTHR11777">
    <property type="entry name" value="ALANYL-TRNA SYNTHETASE"/>
    <property type="match status" value="1"/>
</dbReference>
<dbReference type="Pfam" id="PF02272">
    <property type="entry name" value="DHHA1"/>
    <property type="match status" value="1"/>
</dbReference>
<dbReference type="Pfam" id="PF01411">
    <property type="entry name" value="tRNA-synt_2c"/>
    <property type="match status" value="1"/>
</dbReference>
<dbReference type="Pfam" id="PF07973">
    <property type="entry name" value="tRNA_SAD"/>
    <property type="match status" value="1"/>
</dbReference>
<dbReference type="PRINTS" id="PR00980">
    <property type="entry name" value="TRNASYNTHALA"/>
</dbReference>
<dbReference type="SMART" id="SM00863">
    <property type="entry name" value="tRNA_SAD"/>
    <property type="match status" value="1"/>
</dbReference>
<dbReference type="SUPFAM" id="SSF55681">
    <property type="entry name" value="Class II aaRS and biotin synthetases"/>
    <property type="match status" value="1"/>
</dbReference>
<dbReference type="SUPFAM" id="SSF101353">
    <property type="entry name" value="Putative anticodon-binding domain of alanyl-tRNA synthetase (AlaRS)"/>
    <property type="match status" value="1"/>
</dbReference>
<dbReference type="SUPFAM" id="SSF55186">
    <property type="entry name" value="ThrRS/AlaRS common domain"/>
    <property type="match status" value="1"/>
</dbReference>
<dbReference type="SUPFAM" id="SSF50447">
    <property type="entry name" value="Translation proteins"/>
    <property type="match status" value="1"/>
</dbReference>
<dbReference type="PROSITE" id="PS50860">
    <property type="entry name" value="AA_TRNA_LIGASE_II_ALA"/>
    <property type="match status" value="1"/>
</dbReference>
<name>SYA_HERA2</name>